<proteinExistence type="inferred from homology"/>
<accession>A1DH48</accession>
<name>VATF_NEOFI</name>
<comment type="function">
    <text evidence="1">Subunit of the V1 complex of vacuolar(H+)-ATPase (V-ATPase), a multisubunit enzyme composed of a peripheral complex (V1) that hydrolyzes ATP and a membrane integral complex (V0) that translocates protons (By similarity). V-ATPase is responsible for acidifying and maintaining the pH of intracellular compartments (By similarity).</text>
</comment>
<comment type="subunit">
    <text evidence="1">V-ATPase is a heteromultimeric enzyme composed of a peripheral catalytic V1 complex (components A to H) attached to an integral membrane V0 proton pore complex (components: a, c, c', c'', d, e, f and VOA1).</text>
</comment>
<comment type="subcellular location">
    <subcellularLocation>
        <location evidence="1">Vacuole membrane</location>
        <topology evidence="2">Peripheral membrane protein</topology>
        <orientation evidence="2">Cytoplasmic side</orientation>
    </subcellularLocation>
</comment>
<comment type="similarity">
    <text evidence="2">Belongs to the V-ATPase F subunit family.</text>
</comment>
<dbReference type="EMBL" id="DS027696">
    <property type="protein sequence ID" value="EAW18705.1"/>
    <property type="molecule type" value="Genomic_DNA"/>
</dbReference>
<dbReference type="RefSeq" id="XP_001260602.1">
    <property type="nucleotide sequence ID" value="XM_001260601.1"/>
</dbReference>
<dbReference type="SMR" id="A1DH48"/>
<dbReference type="STRING" id="331117.A1DH48"/>
<dbReference type="EnsemblFungi" id="EAW18705">
    <property type="protein sequence ID" value="EAW18705"/>
    <property type="gene ID" value="NFIA_086600"/>
</dbReference>
<dbReference type="GeneID" id="4587160"/>
<dbReference type="KEGG" id="nfi:NFIA_086600"/>
<dbReference type="VEuPathDB" id="FungiDB:NFIA_086600"/>
<dbReference type="eggNOG" id="KOG3432">
    <property type="taxonomic scope" value="Eukaryota"/>
</dbReference>
<dbReference type="HOGENOM" id="CLU_135754_0_0_1"/>
<dbReference type="OMA" id="IIICQHI"/>
<dbReference type="OrthoDB" id="10261947at2759"/>
<dbReference type="Proteomes" id="UP000006702">
    <property type="component" value="Unassembled WGS sequence"/>
</dbReference>
<dbReference type="GO" id="GO:0000329">
    <property type="term" value="C:fungal-type vacuole membrane"/>
    <property type="evidence" value="ECO:0007669"/>
    <property type="project" value="TreeGrafter"/>
</dbReference>
<dbReference type="GO" id="GO:0000221">
    <property type="term" value="C:vacuolar proton-transporting V-type ATPase, V1 domain"/>
    <property type="evidence" value="ECO:0000250"/>
    <property type="project" value="UniProtKB"/>
</dbReference>
<dbReference type="GO" id="GO:0046961">
    <property type="term" value="F:proton-transporting ATPase activity, rotational mechanism"/>
    <property type="evidence" value="ECO:0007669"/>
    <property type="project" value="InterPro"/>
</dbReference>
<dbReference type="FunFam" id="3.40.50.10580:FF:000002">
    <property type="entry name" value="V-type proton ATPase subunit F"/>
    <property type="match status" value="1"/>
</dbReference>
<dbReference type="Gene3D" id="3.40.50.10580">
    <property type="entry name" value="ATPase, V1 complex, subunit F"/>
    <property type="match status" value="1"/>
</dbReference>
<dbReference type="InterPro" id="IPR008218">
    <property type="entry name" value="ATPase_V1-cplx_f_g_su"/>
</dbReference>
<dbReference type="InterPro" id="IPR005772">
    <property type="entry name" value="ATPase_V1-cplx_fsu_euk"/>
</dbReference>
<dbReference type="InterPro" id="IPR036906">
    <property type="entry name" value="ATPase_V1_fsu_sf"/>
</dbReference>
<dbReference type="NCBIfam" id="TIGR01101">
    <property type="entry name" value="V_ATP_synt_F"/>
    <property type="match status" value="1"/>
</dbReference>
<dbReference type="PANTHER" id="PTHR13861:SF2">
    <property type="entry name" value="V-TYPE PROTON ATPASE SUBUNIT F"/>
    <property type="match status" value="1"/>
</dbReference>
<dbReference type="PANTHER" id="PTHR13861">
    <property type="entry name" value="VACUOLAR ATP SYNTHASE SUBUNIT F"/>
    <property type="match status" value="1"/>
</dbReference>
<dbReference type="Pfam" id="PF01990">
    <property type="entry name" value="ATP-synt_F"/>
    <property type="match status" value="1"/>
</dbReference>
<dbReference type="PIRSF" id="PIRSF015945">
    <property type="entry name" value="ATPase_V1_F_euk"/>
    <property type="match status" value="1"/>
</dbReference>
<dbReference type="SUPFAM" id="SSF159468">
    <property type="entry name" value="AtpF-like"/>
    <property type="match status" value="1"/>
</dbReference>
<feature type="chain" id="PRO_0000406050" description="V-type proton ATPase subunit F">
    <location>
        <begin position="1"/>
        <end position="124"/>
    </location>
</feature>
<gene>
    <name type="primary">vma7</name>
    <name type="ORF">NFIA_086600</name>
</gene>
<evidence type="ECO:0000250" key="1">
    <source>
        <dbReference type="UniProtKB" id="P39111"/>
    </source>
</evidence>
<evidence type="ECO:0000305" key="2"/>
<protein>
    <recommendedName>
        <fullName>V-type proton ATPase subunit F</fullName>
        <shortName>V-ATPase subunit F</shortName>
    </recommendedName>
    <alternativeName>
        <fullName>V-ATPase 14 kDa subunit</fullName>
    </alternativeName>
    <alternativeName>
        <fullName>Vacuolar proton pump subunit F</fullName>
    </alternativeName>
</protein>
<organism>
    <name type="scientific">Neosartorya fischeri (strain ATCC 1020 / DSM 3700 / CBS 544.65 / FGSC A1164 / JCM 1740 / NRRL 181 / WB 181)</name>
    <name type="common">Aspergillus fischerianus</name>
    <dbReference type="NCBI Taxonomy" id="331117"/>
    <lineage>
        <taxon>Eukaryota</taxon>
        <taxon>Fungi</taxon>
        <taxon>Dikarya</taxon>
        <taxon>Ascomycota</taxon>
        <taxon>Pezizomycotina</taxon>
        <taxon>Eurotiomycetes</taxon>
        <taxon>Eurotiomycetidae</taxon>
        <taxon>Eurotiales</taxon>
        <taxon>Aspergillaceae</taxon>
        <taxon>Aspergillus</taxon>
        <taxon>Aspergillus subgen. Fumigati</taxon>
    </lineage>
</organism>
<sequence length="124" mass="13807">MAASAVSYKERQFLAVIGDEDSVTGLLLAGIGHVTDGPDAQRNFLVVDSKTETSAIEKAFQNFTQERKDIAVLLINQHIAERIRHSVDSFADPFPAVLEIPSKDHPYDPEKDSVLKRVRRLFGE</sequence>
<keyword id="KW-0375">Hydrogen ion transport</keyword>
<keyword id="KW-0406">Ion transport</keyword>
<keyword id="KW-0472">Membrane</keyword>
<keyword id="KW-1185">Reference proteome</keyword>
<keyword id="KW-0813">Transport</keyword>
<keyword id="KW-0926">Vacuole</keyword>
<reference key="1">
    <citation type="journal article" date="2008" name="PLoS Genet.">
        <title>Genomic islands in the pathogenic filamentous fungus Aspergillus fumigatus.</title>
        <authorList>
            <person name="Fedorova N.D."/>
            <person name="Khaldi N."/>
            <person name="Joardar V.S."/>
            <person name="Maiti R."/>
            <person name="Amedeo P."/>
            <person name="Anderson M.J."/>
            <person name="Crabtree J."/>
            <person name="Silva J.C."/>
            <person name="Badger J.H."/>
            <person name="Albarraq A."/>
            <person name="Angiuoli S."/>
            <person name="Bussey H."/>
            <person name="Bowyer P."/>
            <person name="Cotty P.J."/>
            <person name="Dyer P.S."/>
            <person name="Egan A."/>
            <person name="Galens K."/>
            <person name="Fraser-Liggett C.M."/>
            <person name="Haas B.J."/>
            <person name="Inman J.M."/>
            <person name="Kent R."/>
            <person name="Lemieux S."/>
            <person name="Malavazi I."/>
            <person name="Orvis J."/>
            <person name="Roemer T."/>
            <person name="Ronning C.M."/>
            <person name="Sundaram J.P."/>
            <person name="Sutton G."/>
            <person name="Turner G."/>
            <person name="Venter J.C."/>
            <person name="White O.R."/>
            <person name="Whitty B.R."/>
            <person name="Youngman P."/>
            <person name="Wolfe K.H."/>
            <person name="Goldman G.H."/>
            <person name="Wortman J.R."/>
            <person name="Jiang B."/>
            <person name="Denning D.W."/>
            <person name="Nierman W.C."/>
        </authorList>
    </citation>
    <scope>NUCLEOTIDE SEQUENCE [LARGE SCALE GENOMIC DNA]</scope>
    <source>
        <strain>ATCC 1020 / DSM 3700 / CBS 544.65 / FGSC A1164 / JCM 1740 / NRRL 181 / WB 181</strain>
    </source>
</reference>